<organism>
    <name type="scientific">Pseudomonas putida (strain GB-1)</name>
    <dbReference type="NCBI Taxonomy" id="76869"/>
    <lineage>
        <taxon>Bacteria</taxon>
        <taxon>Pseudomonadati</taxon>
        <taxon>Pseudomonadota</taxon>
        <taxon>Gammaproteobacteria</taxon>
        <taxon>Pseudomonadales</taxon>
        <taxon>Pseudomonadaceae</taxon>
        <taxon>Pseudomonas</taxon>
    </lineage>
</organism>
<comment type="function">
    <text evidence="1">NDH-1 shuttles electrons from NADH, via FMN and iron-sulfur (Fe-S) centers, to quinones in the respiratory chain. The immediate electron acceptor for the enzyme in this species is believed to be ubiquinone. Couples the redox reaction to proton translocation (for every two electrons transferred, four hydrogen ions are translocated across the cytoplasmic membrane), and thus conserves the redox energy in a proton gradient. This subunit may bind ubiquinone.</text>
</comment>
<comment type="catalytic activity">
    <reaction evidence="1">
        <text>a quinone + NADH + 5 H(+)(in) = a quinol + NAD(+) + 4 H(+)(out)</text>
        <dbReference type="Rhea" id="RHEA:57888"/>
        <dbReference type="ChEBI" id="CHEBI:15378"/>
        <dbReference type="ChEBI" id="CHEBI:24646"/>
        <dbReference type="ChEBI" id="CHEBI:57540"/>
        <dbReference type="ChEBI" id="CHEBI:57945"/>
        <dbReference type="ChEBI" id="CHEBI:132124"/>
    </reaction>
</comment>
<comment type="subunit">
    <text evidence="1">NDH-1 is composed of 13 different subunits. Subunits NuoA, H, J, K, L, M, N constitute the membrane sector of the complex.</text>
</comment>
<comment type="subcellular location">
    <subcellularLocation>
        <location evidence="1">Cell inner membrane</location>
        <topology evidence="1">Multi-pass membrane protein</topology>
    </subcellularLocation>
</comment>
<comment type="similarity">
    <text evidence="1">Belongs to the complex I subunit 1 family.</text>
</comment>
<accession>B0KMY4</accession>
<protein>
    <recommendedName>
        <fullName evidence="1">NADH-quinone oxidoreductase subunit H</fullName>
        <ecNumber evidence="1">7.1.1.-</ecNumber>
    </recommendedName>
    <alternativeName>
        <fullName evidence="1">NADH dehydrogenase I subunit H</fullName>
    </alternativeName>
    <alternativeName>
        <fullName evidence="1">NDH-1 subunit H</fullName>
    </alternativeName>
</protein>
<sequence length="335" mass="37567">MSWFTPEVIDVIIQVVKAIVVLLAVVVCGALLSFVERRLLGWWQDRYGPNRVGPFGMFQIAADMLKMFFKEDWNPPFVDKMIFTLAPVVAMSALLIGFSIIPITPGWGVADLNIGLLFFFAMAGLSVYAVLFAGWSSNNKYALLGSLRASAQTVSYEVFLGLALMGVVVQVGSFNMRDIVEYQAQNLWFIIPQFFGFCTFFIAGVAVTHRHPFDQPEAEQELADGYHIEYAGMKWGMFFVGEYIGIILISALLVTLFFGGWHGPFGILPQVPFLWFALKTAFFIMLFILLRASIPRPRYDQVMDFSWKFCLPLTLINLLVTAAIVLYNTPAVAAQ</sequence>
<keyword id="KW-0997">Cell inner membrane</keyword>
<keyword id="KW-1003">Cell membrane</keyword>
<keyword id="KW-0472">Membrane</keyword>
<keyword id="KW-0520">NAD</keyword>
<keyword id="KW-0874">Quinone</keyword>
<keyword id="KW-1278">Translocase</keyword>
<keyword id="KW-0812">Transmembrane</keyword>
<keyword id="KW-1133">Transmembrane helix</keyword>
<keyword id="KW-0830">Ubiquinone</keyword>
<name>NUOH_PSEPG</name>
<reference key="1">
    <citation type="submission" date="2008-01" db="EMBL/GenBank/DDBJ databases">
        <title>Complete sequence of Pseudomonas putida GB-1.</title>
        <authorList>
            <consortium name="US DOE Joint Genome Institute"/>
            <person name="Copeland A."/>
            <person name="Lucas S."/>
            <person name="Lapidus A."/>
            <person name="Barry K."/>
            <person name="Glavina del Rio T."/>
            <person name="Dalin E."/>
            <person name="Tice H."/>
            <person name="Pitluck S."/>
            <person name="Bruce D."/>
            <person name="Goodwin L."/>
            <person name="Chertkov O."/>
            <person name="Brettin T."/>
            <person name="Detter J.C."/>
            <person name="Han C."/>
            <person name="Kuske C.R."/>
            <person name="Schmutz J."/>
            <person name="Larimer F."/>
            <person name="Land M."/>
            <person name="Hauser L."/>
            <person name="Kyrpides N."/>
            <person name="Kim E."/>
            <person name="McCarthy J.K."/>
            <person name="Richardson P."/>
        </authorList>
    </citation>
    <scope>NUCLEOTIDE SEQUENCE [LARGE SCALE GENOMIC DNA]</scope>
    <source>
        <strain>GB-1</strain>
    </source>
</reference>
<proteinExistence type="inferred from homology"/>
<gene>
    <name evidence="1" type="primary">nuoH</name>
    <name type="ordered locus">PputGB1_3697</name>
</gene>
<dbReference type="EC" id="7.1.1.-" evidence="1"/>
<dbReference type="EMBL" id="CP000926">
    <property type="protein sequence ID" value="ABY99588.1"/>
    <property type="molecule type" value="Genomic_DNA"/>
</dbReference>
<dbReference type="RefSeq" id="WP_012273297.1">
    <property type="nucleotide sequence ID" value="NC_010322.1"/>
</dbReference>
<dbReference type="SMR" id="B0KMY4"/>
<dbReference type="GeneID" id="45523165"/>
<dbReference type="KEGG" id="ppg:PputGB1_3697"/>
<dbReference type="eggNOG" id="COG1005">
    <property type="taxonomic scope" value="Bacteria"/>
</dbReference>
<dbReference type="HOGENOM" id="CLU_015134_0_1_6"/>
<dbReference type="Proteomes" id="UP000002157">
    <property type="component" value="Chromosome"/>
</dbReference>
<dbReference type="GO" id="GO:0005886">
    <property type="term" value="C:plasma membrane"/>
    <property type="evidence" value="ECO:0007669"/>
    <property type="project" value="UniProtKB-SubCell"/>
</dbReference>
<dbReference type="GO" id="GO:0003954">
    <property type="term" value="F:NADH dehydrogenase activity"/>
    <property type="evidence" value="ECO:0007669"/>
    <property type="project" value="TreeGrafter"/>
</dbReference>
<dbReference type="GO" id="GO:0016655">
    <property type="term" value="F:oxidoreductase activity, acting on NAD(P)H, quinone or similar compound as acceptor"/>
    <property type="evidence" value="ECO:0007669"/>
    <property type="project" value="UniProtKB-UniRule"/>
</dbReference>
<dbReference type="GO" id="GO:0048038">
    <property type="term" value="F:quinone binding"/>
    <property type="evidence" value="ECO:0007669"/>
    <property type="project" value="UniProtKB-KW"/>
</dbReference>
<dbReference type="GO" id="GO:0009060">
    <property type="term" value="P:aerobic respiration"/>
    <property type="evidence" value="ECO:0007669"/>
    <property type="project" value="TreeGrafter"/>
</dbReference>
<dbReference type="HAMAP" id="MF_01350">
    <property type="entry name" value="NDH1_NuoH"/>
    <property type="match status" value="1"/>
</dbReference>
<dbReference type="InterPro" id="IPR001694">
    <property type="entry name" value="NADH_UbQ_OxRdtase_su1/FPO"/>
</dbReference>
<dbReference type="InterPro" id="IPR018086">
    <property type="entry name" value="NADH_UbQ_OxRdtase_su1_CS"/>
</dbReference>
<dbReference type="NCBIfam" id="NF004740">
    <property type="entry name" value="PRK06076.1-1"/>
    <property type="match status" value="1"/>
</dbReference>
<dbReference type="NCBIfam" id="NF004741">
    <property type="entry name" value="PRK06076.1-2"/>
    <property type="match status" value="1"/>
</dbReference>
<dbReference type="PANTHER" id="PTHR11432">
    <property type="entry name" value="NADH DEHYDROGENASE SUBUNIT 1"/>
    <property type="match status" value="1"/>
</dbReference>
<dbReference type="PANTHER" id="PTHR11432:SF3">
    <property type="entry name" value="NADH-UBIQUINONE OXIDOREDUCTASE CHAIN 1"/>
    <property type="match status" value="1"/>
</dbReference>
<dbReference type="Pfam" id="PF00146">
    <property type="entry name" value="NADHdh"/>
    <property type="match status" value="1"/>
</dbReference>
<dbReference type="PROSITE" id="PS00667">
    <property type="entry name" value="COMPLEX1_ND1_1"/>
    <property type="match status" value="1"/>
</dbReference>
<dbReference type="PROSITE" id="PS00668">
    <property type="entry name" value="COMPLEX1_ND1_2"/>
    <property type="match status" value="1"/>
</dbReference>
<evidence type="ECO:0000255" key="1">
    <source>
        <dbReference type="HAMAP-Rule" id="MF_01350"/>
    </source>
</evidence>
<feature type="chain" id="PRO_1000086946" description="NADH-quinone oxidoreductase subunit H">
    <location>
        <begin position="1"/>
        <end position="335"/>
    </location>
</feature>
<feature type="transmembrane region" description="Helical" evidence="1">
    <location>
        <begin position="15"/>
        <end position="35"/>
    </location>
</feature>
<feature type="transmembrane region" description="Helical" evidence="1">
    <location>
        <begin position="81"/>
        <end position="101"/>
    </location>
</feature>
<feature type="transmembrane region" description="Helical" evidence="1">
    <location>
        <begin position="114"/>
        <end position="134"/>
    </location>
</feature>
<feature type="transmembrane region" description="Helical" evidence="1">
    <location>
        <begin position="154"/>
        <end position="174"/>
    </location>
</feature>
<feature type="transmembrane region" description="Helical" evidence="1">
    <location>
        <begin position="187"/>
        <end position="207"/>
    </location>
</feature>
<feature type="transmembrane region" description="Helical" evidence="1">
    <location>
        <begin position="238"/>
        <end position="258"/>
    </location>
</feature>
<feature type="transmembrane region" description="Helical" evidence="1">
    <location>
        <begin position="270"/>
        <end position="290"/>
    </location>
</feature>
<feature type="transmembrane region" description="Helical" evidence="1">
    <location>
        <begin position="307"/>
        <end position="327"/>
    </location>
</feature>